<protein>
    <recommendedName>
        <fullName>Transmembrane protein 182</fullName>
    </recommendedName>
</protein>
<evidence type="ECO:0000255" key="1"/>
<evidence type="ECO:0000269" key="2">
    <source>
    </source>
</evidence>
<evidence type="ECO:0000305" key="3"/>
<organism>
    <name type="scientific">Gallus gallus</name>
    <name type="common">Chicken</name>
    <dbReference type="NCBI Taxonomy" id="9031"/>
    <lineage>
        <taxon>Eukaryota</taxon>
        <taxon>Metazoa</taxon>
        <taxon>Chordata</taxon>
        <taxon>Craniata</taxon>
        <taxon>Vertebrata</taxon>
        <taxon>Euteleostomi</taxon>
        <taxon>Archelosauria</taxon>
        <taxon>Archosauria</taxon>
        <taxon>Dinosauria</taxon>
        <taxon>Saurischia</taxon>
        <taxon>Theropoda</taxon>
        <taxon>Coelurosauria</taxon>
        <taxon>Aves</taxon>
        <taxon>Neognathae</taxon>
        <taxon>Galloanserae</taxon>
        <taxon>Galliformes</taxon>
        <taxon>Phasianidae</taxon>
        <taxon>Phasianinae</taxon>
        <taxon>Gallus</taxon>
    </lineage>
</organism>
<reference key="1">
    <citation type="journal article" date="2004" name="Nature">
        <title>Sequence and comparative analysis of the chicken genome provide unique perspectives on vertebrate evolution.</title>
        <authorList>
            <person name="Hillier L.W."/>
            <person name="Miller W."/>
            <person name="Birney E."/>
            <person name="Warren W."/>
            <person name="Hardison R.C."/>
            <person name="Ponting C.P."/>
            <person name="Bork P."/>
            <person name="Burt D.W."/>
            <person name="Groenen M.A.M."/>
            <person name="Delany M.E."/>
            <person name="Dodgson J.B."/>
            <person name="Chinwalla A.T."/>
            <person name="Cliften P.F."/>
            <person name="Clifton S.W."/>
            <person name="Delehaunty K.D."/>
            <person name="Fronick C."/>
            <person name="Fulton R.S."/>
            <person name="Graves T.A."/>
            <person name="Kremitzki C."/>
            <person name="Layman D."/>
            <person name="Magrini V."/>
            <person name="McPherson J.D."/>
            <person name="Miner T.L."/>
            <person name="Minx P."/>
            <person name="Nash W.E."/>
            <person name="Nhan M.N."/>
            <person name="Nelson J.O."/>
            <person name="Oddy L.G."/>
            <person name="Pohl C.S."/>
            <person name="Randall-Maher J."/>
            <person name="Smith S.M."/>
            <person name="Wallis J.W."/>
            <person name="Yang S.-P."/>
            <person name="Romanov M.N."/>
            <person name="Rondelli C.M."/>
            <person name="Paton B."/>
            <person name="Smith J."/>
            <person name="Morrice D."/>
            <person name="Daniels L."/>
            <person name="Tempest H.G."/>
            <person name="Robertson L."/>
            <person name="Masabanda J.S."/>
            <person name="Griffin D.K."/>
            <person name="Vignal A."/>
            <person name="Fillon V."/>
            <person name="Jacobbson L."/>
            <person name="Kerje S."/>
            <person name="Andersson L."/>
            <person name="Crooijmans R.P."/>
            <person name="Aerts J."/>
            <person name="van der Poel J.J."/>
            <person name="Ellegren H."/>
            <person name="Caldwell R.B."/>
            <person name="Hubbard S.J."/>
            <person name="Grafham D.V."/>
            <person name="Kierzek A.M."/>
            <person name="McLaren S.R."/>
            <person name="Overton I.M."/>
            <person name="Arakawa H."/>
            <person name="Beattie K.J."/>
            <person name="Bezzubov Y."/>
            <person name="Boardman P.E."/>
            <person name="Bonfield J.K."/>
            <person name="Croning M.D.R."/>
            <person name="Davies R.M."/>
            <person name="Francis M.D."/>
            <person name="Humphray S.J."/>
            <person name="Scott C.E."/>
            <person name="Taylor R.G."/>
            <person name="Tickle C."/>
            <person name="Brown W.R.A."/>
            <person name="Rogers J."/>
            <person name="Buerstedde J.-M."/>
            <person name="Wilson S.A."/>
            <person name="Stubbs L."/>
            <person name="Ovcharenko I."/>
            <person name="Gordon L."/>
            <person name="Lucas S."/>
            <person name="Miller M.M."/>
            <person name="Inoko H."/>
            <person name="Shiina T."/>
            <person name="Kaufman J."/>
            <person name="Salomonsen J."/>
            <person name="Skjoedt K."/>
            <person name="Wong G.K.-S."/>
            <person name="Wang J."/>
            <person name="Liu B."/>
            <person name="Wang J."/>
            <person name="Yu J."/>
            <person name="Yang H."/>
            <person name="Nefedov M."/>
            <person name="Koriabine M."/>
            <person name="Dejong P.J."/>
            <person name="Goodstadt L."/>
            <person name="Webber C."/>
            <person name="Dickens N.J."/>
            <person name="Letunic I."/>
            <person name="Suyama M."/>
            <person name="Torrents D."/>
            <person name="von Mering C."/>
            <person name="Zdobnov E.M."/>
            <person name="Makova K."/>
            <person name="Nekrutenko A."/>
            <person name="Elnitski L."/>
            <person name="Eswara P."/>
            <person name="King D.C."/>
            <person name="Yang S.-P."/>
            <person name="Tyekucheva S."/>
            <person name="Radakrishnan A."/>
            <person name="Harris R.S."/>
            <person name="Chiaromonte F."/>
            <person name="Taylor J."/>
            <person name="He J."/>
            <person name="Rijnkels M."/>
            <person name="Griffiths-Jones S."/>
            <person name="Ureta-Vidal A."/>
            <person name="Hoffman M.M."/>
            <person name="Severin J."/>
            <person name="Searle S.M.J."/>
            <person name="Law A.S."/>
            <person name="Speed D."/>
            <person name="Waddington D."/>
            <person name="Cheng Z."/>
            <person name="Tuzun E."/>
            <person name="Eichler E."/>
            <person name="Bao Z."/>
            <person name="Flicek P."/>
            <person name="Shteynberg D.D."/>
            <person name="Brent M.R."/>
            <person name="Bye J.M."/>
            <person name="Huckle E.J."/>
            <person name="Chatterji S."/>
            <person name="Dewey C."/>
            <person name="Pachter L."/>
            <person name="Kouranov A."/>
            <person name="Mourelatos Z."/>
            <person name="Hatzigeorgiou A.G."/>
            <person name="Paterson A.H."/>
            <person name="Ivarie R."/>
            <person name="Brandstrom M."/>
            <person name="Axelsson E."/>
            <person name="Backstrom N."/>
            <person name="Berlin S."/>
            <person name="Webster M.T."/>
            <person name="Pourquie O."/>
            <person name="Reymond A."/>
            <person name="Ucla C."/>
            <person name="Antonarakis S.E."/>
            <person name="Long M."/>
            <person name="Emerson J.J."/>
            <person name="Betran E."/>
            <person name="Dupanloup I."/>
            <person name="Kaessmann H."/>
            <person name="Hinrichs A.S."/>
            <person name="Bejerano G."/>
            <person name="Furey T.S."/>
            <person name="Harte R.A."/>
            <person name="Raney B."/>
            <person name="Siepel A."/>
            <person name="Kent W.J."/>
            <person name="Haussler D."/>
            <person name="Eyras E."/>
            <person name="Castelo R."/>
            <person name="Abril J.F."/>
            <person name="Castellano S."/>
            <person name="Camara F."/>
            <person name="Parra G."/>
            <person name="Guigo R."/>
            <person name="Bourque G."/>
            <person name="Tesler G."/>
            <person name="Pevzner P.A."/>
            <person name="Smit A."/>
            <person name="Fulton L.A."/>
            <person name="Mardis E.R."/>
            <person name="Wilson R.K."/>
        </authorList>
    </citation>
    <scope>NUCLEOTIDE SEQUENCE [LARGE SCALE GENOMIC DNA]</scope>
    <source>
        <strain>Red jungle fowl</strain>
    </source>
</reference>
<reference key="2">
    <citation type="journal article" date="2021" name="J. Cachexia Sarcopenia Muscle">
        <title>TMEM182 interacts with integrin beta 1 and regulates myoblast differentiation and muscle regeneration.</title>
        <authorList>
            <person name="Luo W."/>
            <person name="Lin Z."/>
            <person name="Chen J."/>
            <person name="Chen G."/>
            <person name="Zhang S."/>
            <person name="Liu M."/>
            <person name="Li H."/>
            <person name="He D."/>
            <person name="Liang S."/>
            <person name="Luo Q."/>
            <person name="Zhang D."/>
            <person name="Nie Q."/>
            <person name="Zhang X."/>
        </authorList>
    </citation>
    <scope>FUNCTION</scope>
    <scope>SUBCELLULAR LOCATION</scope>
    <scope>TISSUE SPECIFICITY</scope>
    <scope>INDUCTION</scope>
    <scope>INTERACTION WITH ITGB1</scope>
</reference>
<keyword id="KW-1003">Cell membrane</keyword>
<keyword id="KW-0325">Glycoprotein</keyword>
<keyword id="KW-0472">Membrane</keyword>
<keyword id="KW-0517">Myogenesis</keyword>
<keyword id="KW-1185">Reference proteome</keyword>
<keyword id="KW-0732">Signal</keyword>
<keyword id="KW-0812">Transmembrane</keyword>
<keyword id="KW-1133">Transmembrane helix</keyword>
<sequence length="233" mass="26287">MKLSVGIFFGGLFAALGVLLFLVAFGTDYWLLATEIGRCSKAPEDAGTEKATFHHEGFFWRCWFSGNVREHNTSMWKFWYTNQSPSKNCTHAYLSPFPHIRDEHNSTSYDSAVIYRGFWTVLMLLGVITIVMASFLIICAAPFASHILYKAGGGFYILAGVLFSLVVVMYVIWVQAMADLENYTNMKKMDCPDFAVYVRYGWSFMLAPIGVFFALLAGMLFLLVGRAIYLNSD</sequence>
<proteinExistence type="evidence at protein level"/>
<name>TM182_CHICK</name>
<gene>
    <name type="primary">TMEM182</name>
</gene>
<dbReference type="EMBL" id="AADN05000806">
    <property type="status" value="NOT_ANNOTATED_CDS"/>
    <property type="molecule type" value="Genomic_DNA"/>
</dbReference>
<dbReference type="FunCoup" id="A0A1D5NY17">
    <property type="interactions" value="229"/>
</dbReference>
<dbReference type="STRING" id="9031.ENSGALP00000045272"/>
<dbReference type="GlyCosmos" id="A0A1D5NY17">
    <property type="glycosylation" value="2 sites, No reported glycans"/>
</dbReference>
<dbReference type="GlyGen" id="A0A1D5NY17">
    <property type="glycosylation" value="2 sites"/>
</dbReference>
<dbReference type="PaxDb" id="9031-ENSGALP00000041117"/>
<dbReference type="VEuPathDB" id="HostDB:geneid_418721"/>
<dbReference type="eggNOG" id="ENOG502QVS4">
    <property type="taxonomic scope" value="Eukaryota"/>
</dbReference>
<dbReference type="InParanoid" id="A0A1D5NY17"/>
<dbReference type="OrthoDB" id="9942154at2759"/>
<dbReference type="PRO" id="PR:A0A1D5NY17"/>
<dbReference type="Proteomes" id="UP000000539">
    <property type="component" value="Chromosome 1"/>
</dbReference>
<dbReference type="Bgee" id="ENSGALG00000038936">
    <property type="expression patterns" value="Expressed in muscle tissue and 4 other cell types or tissues"/>
</dbReference>
<dbReference type="GO" id="GO:0005886">
    <property type="term" value="C:plasma membrane"/>
    <property type="evidence" value="ECO:0007669"/>
    <property type="project" value="UniProtKB-SubCell"/>
</dbReference>
<dbReference type="GO" id="GO:0007517">
    <property type="term" value="P:muscle organ development"/>
    <property type="evidence" value="ECO:0007669"/>
    <property type="project" value="UniProtKB-KW"/>
</dbReference>
<dbReference type="GO" id="GO:0014906">
    <property type="term" value="P:myotube cell development involved in skeletal muscle regeneration"/>
    <property type="evidence" value="ECO:0000315"/>
    <property type="project" value="UniProtKB"/>
</dbReference>
<dbReference type="GO" id="GO:0014908">
    <property type="term" value="P:myotube differentiation involved in skeletal muscle regeneration"/>
    <property type="evidence" value="ECO:0000315"/>
    <property type="project" value="UniProtKB"/>
</dbReference>
<dbReference type="GO" id="GO:0045662">
    <property type="term" value="P:negative regulation of myoblast differentiation"/>
    <property type="evidence" value="ECO:0000315"/>
    <property type="project" value="UniProtKB"/>
</dbReference>
<dbReference type="GO" id="GO:1901740">
    <property type="term" value="P:negative regulation of myoblast fusion"/>
    <property type="evidence" value="ECO:0000315"/>
    <property type="project" value="UniProtKB"/>
</dbReference>
<dbReference type="Gene3D" id="1.20.140.150">
    <property type="match status" value="1"/>
</dbReference>
<dbReference type="InterPro" id="IPR004031">
    <property type="entry name" value="PMP22/EMP/MP20/Claudin"/>
</dbReference>
<dbReference type="InterPro" id="IPR026763">
    <property type="entry name" value="TMEM182"/>
</dbReference>
<dbReference type="PANTHER" id="PTHR32012:SF0">
    <property type="entry name" value="TRANSMEMBRANE PROTEIN 182"/>
    <property type="match status" value="1"/>
</dbReference>
<dbReference type="PANTHER" id="PTHR32012">
    <property type="entry name" value="TRANSMEMBRANE PROTEIN 182-RELATED"/>
    <property type="match status" value="1"/>
</dbReference>
<dbReference type="Pfam" id="PF13903">
    <property type="entry name" value="Claudin_2"/>
    <property type="match status" value="1"/>
</dbReference>
<comment type="function">
    <text evidence="2">Negatively regulates myogenesis and skeletal muscle regeneration via its association with ITGB1 (PubMed:34427057). Modulates ITGB1 activation by decreasing ITGB1-LAMB1 interaction and inhibiting ITGB1-mediated intracellular signaling during myogenesis (PubMed:34427057).</text>
</comment>
<comment type="subunit">
    <text evidence="2">Interacts with ITGB1.</text>
</comment>
<comment type="subcellular location">
    <subcellularLocation>
        <location evidence="2">Cell membrane</location>
        <topology evidence="1">Multi-pass membrane protein</topology>
    </subcellularLocation>
</comment>
<comment type="tissue specificity">
    <text evidence="2">Expressed in skeletal muscle and adipose tissue.</text>
</comment>
<comment type="induction">
    <text evidence="2">Up-regulated during myoblast differentiation.</text>
</comment>
<comment type="similarity">
    <text evidence="3">Belongs to the TMEM182 family.</text>
</comment>
<feature type="signal peptide" evidence="1">
    <location>
        <begin position="1"/>
        <end position="26"/>
    </location>
</feature>
<feature type="chain" id="PRO_0000454749" description="Transmembrane protein 182" evidence="1">
    <location>
        <begin position="27"/>
        <end position="233"/>
    </location>
</feature>
<feature type="topological domain" description="Extracellular" evidence="3">
    <location>
        <begin position="27"/>
        <end position="117"/>
    </location>
</feature>
<feature type="transmembrane region" description="Helical" evidence="1">
    <location>
        <begin position="118"/>
        <end position="138"/>
    </location>
</feature>
<feature type="topological domain" description="Cytoplasmic" evidence="3">
    <location>
        <begin position="139"/>
        <end position="153"/>
    </location>
</feature>
<feature type="transmembrane region" description="Helical" evidence="1">
    <location>
        <begin position="154"/>
        <end position="174"/>
    </location>
</feature>
<feature type="topological domain" description="Extracellular" evidence="3">
    <location>
        <begin position="175"/>
        <end position="203"/>
    </location>
</feature>
<feature type="transmembrane region" description="Helical" evidence="1">
    <location>
        <begin position="204"/>
        <end position="224"/>
    </location>
</feature>
<feature type="topological domain" description="Cytoplasmic" evidence="3">
    <location>
        <begin position="225"/>
        <end position="233"/>
    </location>
</feature>
<feature type="region of interest" description="Interaction with ITGB1" evidence="2">
    <location>
        <begin position="52"/>
        <end position="62"/>
    </location>
</feature>
<feature type="glycosylation site" description="N-linked (GlcNAc...) asparagine" evidence="1">
    <location>
        <position position="88"/>
    </location>
</feature>
<feature type="glycosylation site" description="N-linked (GlcNAc...) asparagine" evidence="1">
    <location>
        <position position="105"/>
    </location>
</feature>
<accession>A0A1D5NY17</accession>